<organism>
    <name type="scientific">Shewanella loihica (strain ATCC BAA-1088 / PV-4)</name>
    <dbReference type="NCBI Taxonomy" id="323850"/>
    <lineage>
        <taxon>Bacteria</taxon>
        <taxon>Pseudomonadati</taxon>
        <taxon>Pseudomonadota</taxon>
        <taxon>Gammaproteobacteria</taxon>
        <taxon>Alteromonadales</taxon>
        <taxon>Shewanellaceae</taxon>
        <taxon>Shewanella</taxon>
    </lineage>
</organism>
<dbReference type="EMBL" id="CP000606">
    <property type="protein sequence ID" value="ABO22870.1"/>
    <property type="molecule type" value="Genomic_DNA"/>
</dbReference>
<dbReference type="RefSeq" id="WP_006080725.1">
    <property type="nucleotide sequence ID" value="NC_009092.1"/>
</dbReference>
<dbReference type="SMR" id="A3QBM2"/>
<dbReference type="STRING" id="323850.Shew_0999"/>
<dbReference type="GeneID" id="94729004"/>
<dbReference type="KEGG" id="slo:Shew_0999"/>
<dbReference type="eggNOG" id="COG0828">
    <property type="taxonomic scope" value="Bacteria"/>
</dbReference>
<dbReference type="HOGENOM" id="CLU_159258_1_0_6"/>
<dbReference type="OrthoDB" id="9799244at2"/>
<dbReference type="Proteomes" id="UP000001558">
    <property type="component" value="Chromosome"/>
</dbReference>
<dbReference type="GO" id="GO:1990904">
    <property type="term" value="C:ribonucleoprotein complex"/>
    <property type="evidence" value="ECO:0007669"/>
    <property type="project" value="UniProtKB-KW"/>
</dbReference>
<dbReference type="GO" id="GO:0005840">
    <property type="term" value="C:ribosome"/>
    <property type="evidence" value="ECO:0007669"/>
    <property type="project" value="UniProtKB-KW"/>
</dbReference>
<dbReference type="GO" id="GO:0003735">
    <property type="term" value="F:structural constituent of ribosome"/>
    <property type="evidence" value="ECO:0007669"/>
    <property type="project" value="InterPro"/>
</dbReference>
<dbReference type="GO" id="GO:0006412">
    <property type="term" value="P:translation"/>
    <property type="evidence" value="ECO:0007669"/>
    <property type="project" value="UniProtKB-UniRule"/>
</dbReference>
<dbReference type="Gene3D" id="1.20.5.1150">
    <property type="entry name" value="Ribosomal protein S8"/>
    <property type="match status" value="1"/>
</dbReference>
<dbReference type="HAMAP" id="MF_00358">
    <property type="entry name" value="Ribosomal_bS21"/>
    <property type="match status" value="1"/>
</dbReference>
<dbReference type="InterPro" id="IPR001911">
    <property type="entry name" value="Ribosomal_bS21"/>
</dbReference>
<dbReference type="InterPro" id="IPR018278">
    <property type="entry name" value="Ribosomal_bS21_CS"/>
</dbReference>
<dbReference type="InterPro" id="IPR038380">
    <property type="entry name" value="Ribosomal_bS21_sf"/>
</dbReference>
<dbReference type="NCBIfam" id="TIGR00030">
    <property type="entry name" value="S21p"/>
    <property type="match status" value="1"/>
</dbReference>
<dbReference type="PANTHER" id="PTHR21109">
    <property type="entry name" value="MITOCHONDRIAL 28S RIBOSOMAL PROTEIN S21"/>
    <property type="match status" value="1"/>
</dbReference>
<dbReference type="PANTHER" id="PTHR21109:SF22">
    <property type="entry name" value="SMALL RIBOSOMAL SUBUNIT PROTEIN BS21"/>
    <property type="match status" value="1"/>
</dbReference>
<dbReference type="Pfam" id="PF01165">
    <property type="entry name" value="Ribosomal_S21"/>
    <property type="match status" value="1"/>
</dbReference>
<dbReference type="PRINTS" id="PR00976">
    <property type="entry name" value="RIBOSOMALS21"/>
</dbReference>
<dbReference type="PROSITE" id="PS01181">
    <property type="entry name" value="RIBOSOMAL_S21"/>
    <property type="match status" value="1"/>
</dbReference>
<gene>
    <name evidence="1" type="primary">rpsU</name>
    <name type="ordered locus">Shew_0999</name>
</gene>
<protein>
    <recommendedName>
        <fullName evidence="1">Small ribosomal subunit protein bS21</fullName>
    </recommendedName>
    <alternativeName>
        <fullName evidence="2">30S ribosomal protein S21</fullName>
    </alternativeName>
</protein>
<evidence type="ECO:0000255" key="1">
    <source>
        <dbReference type="HAMAP-Rule" id="MF_00358"/>
    </source>
</evidence>
<evidence type="ECO:0000305" key="2"/>
<accession>A3QBM2</accession>
<reference key="1">
    <citation type="submission" date="2007-03" db="EMBL/GenBank/DDBJ databases">
        <title>Complete sequence of Shewanella loihica PV-4.</title>
        <authorList>
            <consortium name="US DOE Joint Genome Institute"/>
            <person name="Copeland A."/>
            <person name="Lucas S."/>
            <person name="Lapidus A."/>
            <person name="Barry K."/>
            <person name="Detter J.C."/>
            <person name="Glavina del Rio T."/>
            <person name="Hammon N."/>
            <person name="Israni S."/>
            <person name="Dalin E."/>
            <person name="Tice H."/>
            <person name="Pitluck S."/>
            <person name="Chain P."/>
            <person name="Malfatti S."/>
            <person name="Shin M."/>
            <person name="Vergez L."/>
            <person name="Schmutz J."/>
            <person name="Larimer F."/>
            <person name="Land M."/>
            <person name="Hauser L."/>
            <person name="Kyrpides N."/>
            <person name="Mikhailova N."/>
            <person name="Romine M.F."/>
            <person name="Serres G."/>
            <person name="Fredrickson J."/>
            <person name="Tiedje J."/>
            <person name="Richardson P."/>
        </authorList>
    </citation>
    <scope>NUCLEOTIDE SEQUENCE [LARGE SCALE GENOMIC DNA]</scope>
    <source>
        <strain>ATCC BAA-1088 / PV-4</strain>
    </source>
</reference>
<comment type="similarity">
    <text evidence="1">Belongs to the bacterial ribosomal protein bS21 family.</text>
</comment>
<name>RS21_SHELP</name>
<feature type="chain" id="PRO_1000005171" description="Small ribosomal subunit protein bS21">
    <location>
        <begin position="1"/>
        <end position="71"/>
    </location>
</feature>
<proteinExistence type="inferred from homology"/>
<keyword id="KW-1185">Reference proteome</keyword>
<keyword id="KW-0687">Ribonucleoprotein</keyword>
<keyword id="KW-0689">Ribosomal protein</keyword>
<sequence length="71" mass="8345">MPIIKVRENEPFDVALRRFKRSCEKAGILADVRAREFYEKPTTARKRAKAAAVKRLAKKLSRENARRVRLY</sequence>